<comment type="catalytic activity">
    <reaction evidence="2">
        <text>GTP + H2O = 7,8-dihydroneopterin 3'-triphosphate + formate + H(+)</text>
        <dbReference type="Rhea" id="RHEA:17473"/>
        <dbReference type="ChEBI" id="CHEBI:15377"/>
        <dbReference type="ChEBI" id="CHEBI:15378"/>
        <dbReference type="ChEBI" id="CHEBI:15740"/>
        <dbReference type="ChEBI" id="CHEBI:37565"/>
        <dbReference type="ChEBI" id="CHEBI:58462"/>
        <dbReference type="EC" id="3.5.4.16"/>
    </reaction>
</comment>
<comment type="pathway">
    <text evidence="2">Cofactor biosynthesis; 7,8-dihydroneopterin triphosphate biosynthesis; 7,8-dihydroneopterin triphosphate from GTP: step 1/1.</text>
</comment>
<comment type="subunit">
    <text evidence="1">Toroid-shaped homodecamer, composed of two pentamers of five dimers.</text>
</comment>
<comment type="similarity">
    <text evidence="2">Belongs to the GTP cyclohydrolase I family.</text>
</comment>
<evidence type="ECO:0000250" key="1"/>
<evidence type="ECO:0000255" key="2">
    <source>
        <dbReference type="HAMAP-Rule" id="MF_00223"/>
    </source>
</evidence>
<organism>
    <name type="scientific">Bartonella quintana (strain Toulouse)</name>
    <name type="common">Rochalimaea quintana</name>
    <dbReference type="NCBI Taxonomy" id="283165"/>
    <lineage>
        <taxon>Bacteria</taxon>
        <taxon>Pseudomonadati</taxon>
        <taxon>Pseudomonadota</taxon>
        <taxon>Alphaproteobacteria</taxon>
        <taxon>Hyphomicrobiales</taxon>
        <taxon>Bartonellaceae</taxon>
        <taxon>Bartonella</taxon>
    </lineage>
</organism>
<accession>Q6FZZ4</accession>
<keyword id="KW-0342">GTP-binding</keyword>
<keyword id="KW-0378">Hydrolase</keyword>
<keyword id="KW-0479">Metal-binding</keyword>
<keyword id="KW-0547">Nucleotide-binding</keyword>
<keyword id="KW-0554">One-carbon metabolism</keyword>
<keyword id="KW-0862">Zinc</keyword>
<proteinExistence type="inferred from homology"/>
<sequence length="206" mass="23255">MHNIKGGTKNPFLSGRKRPHFEEVEAAIRTLLLWIGENPNREGLLDTPRRVAKAYRDLFIGYGESVEEILGTVFEEVSGYNEPVIVKDISFYSHCEHHMIPIVGKAHIAYLPDEKVVGLSKIARIVDVFSRRLQTQETMTAQIADALEEYLKPCGIAVLIEAEHMCMTMRGVQKQGATTITTSFHGSYEKDQVAQTNFMMIVRRSS</sequence>
<feature type="chain" id="PRO_1000043666" description="GTP cyclohydrolase 1">
    <location>
        <begin position="1"/>
        <end position="206"/>
    </location>
</feature>
<feature type="binding site" evidence="2">
    <location>
        <position position="95"/>
    </location>
    <ligand>
        <name>Zn(2+)</name>
        <dbReference type="ChEBI" id="CHEBI:29105"/>
    </ligand>
</feature>
<feature type="binding site" evidence="2">
    <location>
        <position position="98"/>
    </location>
    <ligand>
        <name>Zn(2+)</name>
        <dbReference type="ChEBI" id="CHEBI:29105"/>
    </ligand>
</feature>
<feature type="binding site" evidence="2">
    <location>
        <position position="166"/>
    </location>
    <ligand>
        <name>Zn(2+)</name>
        <dbReference type="ChEBI" id="CHEBI:29105"/>
    </ligand>
</feature>
<name>GCH1_BARQU</name>
<dbReference type="EC" id="3.5.4.16" evidence="2"/>
<dbReference type="EMBL" id="BX897700">
    <property type="protein sequence ID" value="CAF26049.1"/>
    <property type="molecule type" value="Genomic_DNA"/>
</dbReference>
<dbReference type="RefSeq" id="WP_011179323.1">
    <property type="nucleotide sequence ID" value="NC_005955.1"/>
</dbReference>
<dbReference type="SMR" id="Q6FZZ4"/>
<dbReference type="KEGG" id="bqu:BQ05540"/>
<dbReference type="eggNOG" id="COG0302">
    <property type="taxonomic scope" value="Bacteria"/>
</dbReference>
<dbReference type="HOGENOM" id="CLU_049768_3_1_5"/>
<dbReference type="OrthoDB" id="9801207at2"/>
<dbReference type="UniPathway" id="UPA00848">
    <property type="reaction ID" value="UER00151"/>
</dbReference>
<dbReference type="Proteomes" id="UP000000597">
    <property type="component" value="Chromosome"/>
</dbReference>
<dbReference type="GO" id="GO:0005737">
    <property type="term" value="C:cytoplasm"/>
    <property type="evidence" value="ECO:0007669"/>
    <property type="project" value="TreeGrafter"/>
</dbReference>
<dbReference type="GO" id="GO:0005525">
    <property type="term" value="F:GTP binding"/>
    <property type="evidence" value="ECO:0007669"/>
    <property type="project" value="UniProtKB-KW"/>
</dbReference>
<dbReference type="GO" id="GO:0003934">
    <property type="term" value="F:GTP cyclohydrolase I activity"/>
    <property type="evidence" value="ECO:0007669"/>
    <property type="project" value="UniProtKB-UniRule"/>
</dbReference>
<dbReference type="GO" id="GO:0008270">
    <property type="term" value="F:zinc ion binding"/>
    <property type="evidence" value="ECO:0007669"/>
    <property type="project" value="UniProtKB-UniRule"/>
</dbReference>
<dbReference type="GO" id="GO:0006730">
    <property type="term" value="P:one-carbon metabolic process"/>
    <property type="evidence" value="ECO:0007669"/>
    <property type="project" value="UniProtKB-UniRule"/>
</dbReference>
<dbReference type="GO" id="GO:0006729">
    <property type="term" value="P:tetrahydrobiopterin biosynthetic process"/>
    <property type="evidence" value="ECO:0007669"/>
    <property type="project" value="TreeGrafter"/>
</dbReference>
<dbReference type="GO" id="GO:0046654">
    <property type="term" value="P:tetrahydrofolate biosynthetic process"/>
    <property type="evidence" value="ECO:0007669"/>
    <property type="project" value="UniProtKB-UniRule"/>
</dbReference>
<dbReference type="FunFam" id="1.10.286.10:FF:000001">
    <property type="entry name" value="GTP cyclohydrolase 1"/>
    <property type="match status" value="1"/>
</dbReference>
<dbReference type="FunFam" id="3.30.1130.10:FF:000001">
    <property type="entry name" value="GTP cyclohydrolase 1"/>
    <property type="match status" value="1"/>
</dbReference>
<dbReference type="Gene3D" id="1.10.286.10">
    <property type="match status" value="1"/>
</dbReference>
<dbReference type="Gene3D" id="3.30.1130.10">
    <property type="match status" value="1"/>
</dbReference>
<dbReference type="HAMAP" id="MF_00223">
    <property type="entry name" value="FolE"/>
    <property type="match status" value="1"/>
</dbReference>
<dbReference type="InterPro" id="IPR043133">
    <property type="entry name" value="GTP-CH-I_C/QueF"/>
</dbReference>
<dbReference type="InterPro" id="IPR043134">
    <property type="entry name" value="GTP-CH-I_N"/>
</dbReference>
<dbReference type="InterPro" id="IPR001474">
    <property type="entry name" value="GTP_CycHdrlase_I"/>
</dbReference>
<dbReference type="InterPro" id="IPR018234">
    <property type="entry name" value="GTP_CycHdrlase_I_CS"/>
</dbReference>
<dbReference type="InterPro" id="IPR020602">
    <property type="entry name" value="GTP_CycHdrlase_I_dom"/>
</dbReference>
<dbReference type="NCBIfam" id="TIGR00063">
    <property type="entry name" value="folE"/>
    <property type="match status" value="1"/>
</dbReference>
<dbReference type="NCBIfam" id="NF006825">
    <property type="entry name" value="PRK09347.1-2"/>
    <property type="match status" value="1"/>
</dbReference>
<dbReference type="NCBIfam" id="NF006826">
    <property type="entry name" value="PRK09347.1-3"/>
    <property type="match status" value="1"/>
</dbReference>
<dbReference type="PANTHER" id="PTHR11109:SF7">
    <property type="entry name" value="GTP CYCLOHYDROLASE 1"/>
    <property type="match status" value="1"/>
</dbReference>
<dbReference type="PANTHER" id="PTHR11109">
    <property type="entry name" value="GTP CYCLOHYDROLASE I"/>
    <property type="match status" value="1"/>
</dbReference>
<dbReference type="Pfam" id="PF01227">
    <property type="entry name" value="GTP_cyclohydroI"/>
    <property type="match status" value="1"/>
</dbReference>
<dbReference type="SUPFAM" id="SSF55620">
    <property type="entry name" value="Tetrahydrobiopterin biosynthesis enzymes-like"/>
    <property type="match status" value="1"/>
</dbReference>
<dbReference type="PROSITE" id="PS00859">
    <property type="entry name" value="GTP_CYCLOHYDROL_1_1"/>
    <property type="match status" value="1"/>
</dbReference>
<reference key="1">
    <citation type="journal article" date="2004" name="Proc. Natl. Acad. Sci. U.S.A.">
        <title>The louse-borne human pathogen Bartonella quintana is a genomic derivative of the zoonotic agent Bartonella henselae.</title>
        <authorList>
            <person name="Alsmark U.C.M."/>
            <person name="Frank A.C."/>
            <person name="Karlberg E.O."/>
            <person name="Legault B.-A."/>
            <person name="Ardell D.H."/>
            <person name="Canbaeck B."/>
            <person name="Eriksson A.-S."/>
            <person name="Naeslund A.K."/>
            <person name="Handley S.A."/>
            <person name="Huvet M."/>
            <person name="La Scola B."/>
            <person name="Holmberg M."/>
            <person name="Andersson S.G.E."/>
        </authorList>
    </citation>
    <scope>NUCLEOTIDE SEQUENCE [LARGE SCALE GENOMIC DNA]</scope>
    <source>
        <strain>Toulouse</strain>
    </source>
</reference>
<gene>
    <name evidence="2" type="primary">folE</name>
    <name type="ordered locus">BQ05540</name>
</gene>
<protein>
    <recommendedName>
        <fullName evidence="2">GTP cyclohydrolase 1</fullName>
        <ecNumber evidence="2">3.5.4.16</ecNumber>
    </recommendedName>
    <alternativeName>
        <fullName evidence="2">GTP cyclohydrolase I</fullName>
        <shortName evidence="2">GTP-CH-I</shortName>
    </alternativeName>
</protein>